<proteinExistence type="inferred from homology"/>
<keyword id="KW-0186">Copper</keyword>
<keyword id="KW-0249">Electron transport</keyword>
<keyword id="KW-0460">Magnesium</keyword>
<keyword id="KW-0472">Membrane</keyword>
<keyword id="KW-0479">Metal-binding</keyword>
<keyword id="KW-0496">Mitochondrion</keyword>
<keyword id="KW-0999">Mitochondrion inner membrane</keyword>
<keyword id="KW-1185">Reference proteome</keyword>
<keyword id="KW-0679">Respiratory chain</keyword>
<keyword id="KW-1278">Translocase</keyword>
<keyword id="KW-0812">Transmembrane</keyword>
<keyword id="KW-1133">Transmembrane helix</keyword>
<keyword id="KW-0813">Transport</keyword>
<geneLocation type="mitochondrion"/>
<comment type="function">
    <text evidence="2">Component of the cytochrome c oxidase, the last enzyme in the mitochondrial electron transport chain which drives oxidative phosphorylation. The respiratory chain contains 3 multisubunit complexes succinate dehydrogenase (complex II, CII), ubiquinol-cytochrome c oxidoreductase (cytochrome b-c1 complex, complex III, CIII) and cytochrome c oxidase (complex IV, CIV), that cooperate to transfer electrons derived from NADH and succinate to molecular oxygen, creating an electrochemical gradient over the inner membrane that drives transmembrane transport and the ATP synthase. Cytochrome c oxidase is the component of the respiratory chain that catalyzes the reduction of oxygen to water. Electrons originating from reduced cytochrome c in the intermembrane space (IMS) are transferred via the dinuclear copper A center (CU(A)) of subunit 2 and heme A of subunit 1 to the active site in subunit 1, a binuclear center (BNC) formed by heme A3 and copper B (CU(B)). The BNC reduces molecular oxygen to 2 water molecules using 4 electrons from cytochrome c in the IMS and 4 protons from the mitochondrial matrix.</text>
</comment>
<comment type="catalytic activity">
    <reaction evidence="2">
        <text>4 Fe(II)-[cytochrome c] + O2 + 8 H(+)(in) = 4 Fe(III)-[cytochrome c] + 2 H2O + 4 H(+)(out)</text>
        <dbReference type="Rhea" id="RHEA:11436"/>
        <dbReference type="Rhea" id="RHEA-COMP:10350"/>
        <dbReference type="Rhea" id="RHEA-COMP:14399"/>
        <dbReference type="ChEBI" id="CHEBI:15377"/>
        <dbReference type="ChEBI" id="CHEBI:15378"/>
        <dbReference type="ChEBI" id="CHEBI:15379"/>
        <dbReference type="ChEBI" id="CHEBI:29033"/>
        <dbReference type="ChEBI" id="CHEBI:29034"/>
        <dbReference type="EC" id="7.1.1.9"/>
    </reaction>
    <physiologicalReaction direction="left-to-right" evidence="2">
        <dbReference type="Rhea" id="RHEA:11437"/>
    </physiologicalReaction>
</comment>
<comment type="cofactor">
    <cofactor evidence="3">
        <name>Cu cation</name>
        <dbReference type="ChEBI" id="CHEBI:23378"/>
    </cofactor>
    <text evidence="3">Binds a dinuclear copper A center per subunit.</text>
</comment>
<comment type="subunit">
    <text evidence="1 3">Component of the cytochrome c oxidase (complex IV, CIV), a multisubunit enzyme composed of 14 subunits. The complex is composed of a catalytic core of 3 subunits MT-CO1, MT-CO2 and MT-CO3, encoded in the mitochondrial DNA, and 11 supernumerary subunits COX4I, COX5A, COX5B, COX6A, COX6B, COX6C, COX7A, COX7B, COX7C, COX8 and NDUFA4, which are encoded in the nuclear genome. The complex exists as a monomer or a dimer and forms supercomplexes (SCs) in the inner mitochondrial membrane with NADH-ubiquinone oxidoreductase (complex I, CI) and ubiquinol-cytochrome c oxidoreductase (cytochrome b-c1 complex, complex III, CIII), resulting in different assemblies (supercomplex SCI(1)III(2)IV(1) and megacomplex MCI(2)III(2)IV(2)) (By similarity). Found in a complex with TMEM177, COA6, COX18, COX20, SCO1 and SCO2. Interacts with TMEM177 in a COX20-dependent manner. Interacts with COX20. Interacts with COX16 (By similarity).</text>
</comment>
<comment type="subcellular location">
    <subcellularLocation>
        <location evidence="3">Mitochondrion inner membrane</location>
        <topology evidence="3">Multi-pass membrane protein</topology>
    </subcellularLocation>
</comment>
<comment type="similarity">
    <text evidence="4">Belongs to the cytochrome c oxidase subunit 2 family.</text>
</comment>
<evidence type="ECO:0000250" key="1">
    <source>
        <dbReference type="UniProtKB" id="P00403"/>
    </source>
</evidence>
<evidence type="ECO:0000250" key="2">
    <source>
        <dbReference type="UniProtKB" id="P00410"/>
    </source>
</evidence>
<evidence type="ECO:0000250" key="3">
    <source>
        <dbReference type="UniProtKB" id="P68530"/>
    </source>
</evidence>
<evidence type="ECO:0000305" key="4"/>
<name>COX2_THEGE</name>
<sequence length="227" mass="25509">MAHPVQLGLQDATSPVMEELVTFHDHALMAMFLISFLILYALSATLTTKLTNTNITDAQEMETIWTILPAVILVLIALPSLRILYMTDEINNPSFTIKSIGHQWYWTYEYTDYGGLIFNSYMLPPLFLNPGDLRLLEVDNRVVLPIEAPVRMMITSQDVLHSWTIPTLGLKTDAVPGRLNQTVFTATRPGVYYGQCSEICGANHSFMPIVAELIPLKIFEMGPVFTL</sequence>
<reference key="1">
    <citation type="journal article" date="1992" name="Mol. Biol. Evol.">
        <title>Mitochondrial DNA phylogeny of the Old-World monkey tribe Papionini.</title>
        <authorList>
            <person name="Disotell T.R."/>
            <person name="Honeycutt R.L."/>
            <person name="Ruvolo M."/>
        </authorList>
    </citation>
    <scope>NUCLEOTIDE SEQUENCE [GENOMIC DNA]</scope>
</reference>
<organism>
    <name type="scientific">Theropithecus gelada</name>
    <name type="common">Gelada baboon</name>
    <dbReference type="NCBI Taxonomy" id="9565"/>
    <lineage>
        <taxon>Eukaryota</taxon>
        <taxon>Metazoa</taxon>
        <taxon>Chordata</taxon>
        <taxon>Craniata</taxon>
        <taxon>Vertebrata</taxon>
        <taxon>Euteleostomi</taxon>
        <taxon>Mammalia</taxon>
        <taxon>Eutheria</taxon>
        <taxon>Euarchontoglires</taxon>
        <taxon>Primates</taxon>
        <taxon>Haplorrhini</taxon>
        <taxon>Catarrhini</taxon>
        <taxon>Cercopithecidae</taxon>
        <taxon>Cercopithecinae</taxon>
        <taxon>Theropithecus</taxon>
    </lineage>
</organism>
<accession>P98044</accession>
<feature type="chain" id="PRO_0000183703" description="Cytochrome c oxidase subunit 2">
    <location>
        <begin position="1"/>
        <end position="227"/>
    </location>
</feature>
<feature type="topological domain" description="Mitochondrial intermembrane" evidence="3">
    <location>
        <begin position="1"/>
        <end position="14"/>
    </location>
</feature>
<feature type="transmembrane region" description="Helical; Name=I" evidence="3">
    <location>
        <begin position="15"/>
        <end position="45"/>
    </location>
</feature>
<feature type="topological domain" description="Mitochondrial matrix" evidence="3">
    <location>
        <begin position="46"/>
        <end position="59"/>
    </location>
</feature>
<feature type="transmembrane region" description="Helical; Name=II" evidence="3">
    <location>
        <begin position="60"/>
        <end position="87"/>
    </location>
</feature>
<feature type="topological domain" description="Mitochondrial intermembrane" evidence="3">
    <location>
        <begin position="88"/>
        <end position="227"/>
    </location>
</feature>
<feature type="binding site" evidence="3">
    <location>
        <position position="161"/>
    </location>
    <ligand>
        <name>Cu cation</name>
        <dbReference type="ChEBI" id="CHEBI:23378"/>
        <label>A1</label>
    </ligand>
</feature>
<feature type="binding site" evidence="3">
    <location>
        <position position="196"/>
    </location>
    <ligand>
        <name>Cu cation</name>
        <dbReference type="ChEBI" id="CHEBI:23378"/>
        <label>A1</label>
    </ligand>
</feature>
<feature type="binding site" evidence="3">
    <location>
        <position position="196"/>
    </location>
    <ligand>
        <name>Cu cation</name>
        <dbReference type="ChEBI" id="CHEBI:23378"/>
        <label>A2</label>
    </ligand>
</feature>
<feature type="binding site" evidence="3">
    <location>
        <position position="198"/>
    </location>
    <ligand>
        <name>Cu cation</name>
        <dbReference type="ChEBI" id="CHEBI:23378"/>
        <label>A2</label>
    </ligand>
</feature>
<feature type="binding site" evidence="3">
    <location>
        <position position="198"/>
    </location>
    <ligand>
        <name>Mg(2+)</name>
        <dbReference type="ChEBI" id="CHEBI:18420"/>
        <note>ligand shared with MT-CO1</note>
    </ligand>
</feature>
<feature type="binding site" evidence="3">
    <location>
        <position position="200"/>
    </location>
    <ligand>
        <name>Cu cation</name>
        <dbReference type="ChEBI" id="CHEBI:23378"/>
        <label>A1</label>
    </ligand>
</feature>
<feature type="binding site" evidence="3">
    <location>
        <position position="200"/>
    </location>
    <ligand>
        <name>Cu cation</name>
        <dbReference type="ChEBI" id="CHEBI:23378"/>
        <label>A2</label>
    </ligand>
</feature>
<feature type="binding site" evidence="3">
    <location>
        <position position="204"/>
    </location>
    <ligand>
        <name>Cu cation</name>
        <dbReference type="ChEBI" id="CHEBI:23378"/>
        <label>A2</label>
    </ligand>
</feature>
<feature type="binding site" evidence="3">
    <location>
        <position position="207"/>
    </location>
    <ligand>
        <name>Cu cation</name>
        <dbReference type="ChEBI" id="CHEBI:23378"/>
        <label>A1</label>
    </ligand>
</feature>
<protein>
    <recommendedName>
        <fullName>Cytochrome c oxidase subunit 2</fullName>
        <ecNumber>7.1.1.9</ecNumber>
    </recommendedName>
    <alternativeName>
        <fullName>Cytochrome c oxidase polypeptide II</fullName>
    </alternativeName>
</protein>
<dbReference type="EC" id="7.1.1.9"/>
<dbReference type="EMBL" id="M74009">
    <property type="protein sequence ID" value="AAA32106.1"/>
    <property type="molecule type" value="Genomic_DNA"/>
</dbReference>
<dbReference type="PIR" id="I61850">
    <property type="entry name" value="I61850"/>
</dbReference>
<dbReference type="RefSeq" id="YP_007183091.1">
    <property type="nucleotide sequence ID" value="NC_019802.1"/>
</dbReference>
<dbReference type="SMR" id="P98044"/>
<dbReference type="GeneID" id="14216784"/>
<dbReference type="KEGG" id="tge:14216784"/>
<dbReference type="CTD" id="4513"/>
<dbReference type="OrthoDB" id="13737at314294"/>
<dbReference type="Proteomes" id="UP000694411">
    <property type="component" value="Unplaced"/>
</dbReference>
<dbReference type="GO" id="GO:0005743">
    <property type="term" value="C:mitochondrial inner membrane"/>
    <property type="evidence" value="ECO:0007669"/>
    <property type="project" value="UniProtKB-SubCell"/>
</dbReference>
<dbReference type="GO" id="GO:0005739">
    <property type="term" value="C:mitochondrion"/>
    <property type="evidence" value="ECO:0000250"/>
    <property type="project" value="UniProtKB"/>
</dbReference>
<dbReference type="GO" id="GO:0045277">
    <property type="term" value="C:respiratory chain complex IV"/>
    <property type="evidence" value="ECO:0000250"/>
    <property type="project" value="UniProtKB"/>
</dbReference>
<dbReference type="GO" id="GO:0005507">
    <property type="term" value="F:copper ion binding"/>
    <property type="evidence" value="ECO:0007669"/>
    <property type="project" value="InterPro"/>
</dbReference>
<dbReference type="GO" id="GO:0004129">
    <property type="term" value="F:cytochrome-c oxidase activity"/>
    <property type="evidence" value="ECO:0007669"/>
    <property type="project" value="UniProtKB-EC"/>
</dbReference>
<dbReference type="GO" id="GO:0042773">
    <property type="term" value="P:ATP synthesis coupled electron transport"/>
    <property type="evidence" value="ECO:0007669"/>
    <property type="project" value="TreeGrafter"/>
</dbReference>
<dbReference type="CDD" id="cd13912">
    <property type="entry name" value="CcO_II_C"/>
    <property type="match status" value="1"/>
</dbReference>
<dbReference type="FunFam" id="1.10.287.90:FF:000001">
    <property type="entry name" value="Cytochrome c oxidase subunit 2"/>
    <property type="match status" value="1"/>
</dbReference>
<dbReference type="FunFam" id="2.60.40.420:FF:000001">
    <property type="entry name" value="Cytochrome c oxidase subunit 2"/>
    <property type="match status" value="1"/>
</dbReference>
<dbReference type="Gene3D" id="1.10.287.90">
    <property type="match status" value="1"/>
</dbReference>
<dbReference type="Gene3D" id="2.60.40.420">
    <property type="entry name" value="Cupredoxins - blue copper proteins"/>
    <property type="match status" value="1"/>
</dbReference>
<dbReference type="InterPro" id="IPR045187">
    <property type="entry name" value="CcO_II"/>
</dbReference>
<dbReference type="InterPro" id="IPR002429">
    <property type="entry name" value="CcO_II-like_C"/>
</dbReference>
<dbReference type="InterPro" id="IPR034210">
    <property type="entry name" value="CcO_II_C"/>
</dbReference>
<dbReference type="InterPro" id="IPR001505">
    <property type="entry name" value="Copper_CuA"/>
</dbReference>
<dbReference type="InterPro" id="IPR008972">
    <property type="entry name" value="Cupredoxin"/>
</dbReference>
<dbReference type="InterPro" id="IPR014222">
    <property type="entry name" value="Cyt_c_oxidase_su2"/>
</dbReference>
<dbReference type="InterPro" id="IPR011759">
    <property type="entry name" value="Cyt_c_oxidase_su2_TM_dom"/>
</dbReference>
<dbReference type="InterPro" id="IPR036257">
    <property type="entry name" value="Cyt_c_oxidase_su2_TM_sf"/>
</dbReference>
<dbReference type="NCBIfam" id="TIGR02866">
    <property type="entry name" value="CoxB"/>
    <property type="match status" value="1"/>
</dbReference>
<dbReference type="PANTHER" id="PTHR22888:SF9">
    <property type="entry name" value="CYTOCHROME C OXIDASE SUBUNIT 2"/>
    <property type="match status" value="1"/>
</dbReference>
<dbReference type="PANTHER" id="PTHR22888">
    <property type="entry name" value="CYTOCHROME C OXIDASE, SUBUNIT II"/>
    <property type="match status" value="1"/>
</dbReference>
<dbReference type="Pfam" id="PF00116">
    <property type="entry name" value="COX2"/>
    <property type="match status" value="1"/>
</dbReference>
<dbReference type="Pfam" id="PF02790">
    <property type="entry name" value="COX2_TM"/>
    <property type="match status" value="1"/>
</dbReference>
<dbReference type="PRINTS" id="PR01166">
    <property type="entry name" value="CYCOXIDASEII"/>
</dbReference>
<dbReference type="SUPFAM" id="SSF49503">
    <property type="entry name" value="Cupredoxins"/>
    <property type="match status" value="1"/>
</dbReference>
<dbReference type="SUPFAM" id="SSF81464">
    <property type="entry name" value="Cytochrome c oxidase subunit II-like, transmembrane region"/>
    <property type="match status" value="1"/>
</dbReference>
<dbReference type="PROSITE" id="PS00078">
    <property type="entry name" value="COX2"/>
    <property type="match status" value="1"/>
</dbReference>
<dbReference type="PROSITE" id="PS50857">
    <property type="entry name" value="COX2_CUA"/>
    <property type="match status" value="1"/>
</dbReference>
<dbReference type="PROSITE" id="PS50999">
    <property type="entry name" value="COX2_TM"/>
    <property type="match status" value="1"/>
</dbReference>
<gene>
    <name type="primary">MT-CO2</name>
    <name type="synonym">COII</name>
    <name type="synonym">COX2</name>
    <name type="synonym">COXII</name>
    <name type="synonym">MTCO2</name>
</gene>